<gene>
    <name evidence="1" type="primary">secA1</name>
    <name type="ordered locus">BT9727_4868</name>
</gene>
<protein>
    <recommendedName>
        <fullName evidence="1">Protein translocase subunit SecA 1</fullName>
        <ecNumber evidence="1">7.4.2.8</ecNumber>
    </recommendedName>
</protein>
<comment type="function">
    <text evidence="1">Part of the Sec protein translocase complex. Interacts with the SecYEG preprotein conducting channel. Has a central role in coupling the hydrolysis of ATP to the transfer of proteins into and across the cell membrane, serving as an ATP-driven molecular motor driving the stepwise translocation of polypeptide chains across the membrane.</text>
</comment>
<comment type="catalytic activity">
    <reaction evidence="1">
        <text>ATP + H2O + cellular proteinSide 1 = ADP + phosphate + cellular proteinSide 2.</text>
        <dbReference type="EC" id="7.4.2.8"/>
    </reaction>
</comment>
<comment type="cofactor">
    <cofactor evidence="1">
        <name>Zn(2+)</name>
        <dbReference type="ChEBI" id="CHEBI:29105"/>
    </cofactor>
    <text evidence="1">May bind 1 zinc ion per subunit.</text>
</comment>
<comment type="subunit">
    <text evidence="1">Monomer and homodimer. Part of the essential Sec protein translocation apparatus which comprises SecA, SecYEG and auxiliary proteins SecDF. Other proteins may also be involved.</text>
</comment>
<comment type="subcellular location">
    <subcellularLocation>
        <location evidence="1">Cell membrane</location>
        <topology evidence="1">Peripheral membrane protein</topology>
        <orientation evidence="1">Cytoplasmic side</orientation>
    </subcellularLocation>
    <subcellularLocation>
        <location evidence="1">Cytoplasm</location>
    </subcellularLocation>
    <text evidence="1">Distribution is 50-50.</text>
</comment>
<comment type="similarity">
    <text evidence="1">Belongs to the SecA family.</text>
</comment>
<reference key="1">
    <citation type="journal article" date="2006" name="J. Bacteriol.">
        <title>Pathogenomic sequence analysis of Bacillus cereus and Bacillus thuringiensis isolates closely related to Bacillus anthracis.</title>
        <authorList>
            <person name="Han C.S."/>
            <person name="Xie G."/>
            <person name="Challacombe J.F."/>
            <person name="Altherr M.R."/>
            <person name="Bhotika S.S."/>
            <person name="Bruce D."/>
            <person name="Campbell C.S."/>
            <person name="Campbell M.L."/>
            <person name="Chen J."/>
            <person name="Chertkov O."/>
            <person name="Cleland C."/>
            <person name="Dimitrijevic M."/>
            <person name="Doggett N.A."/>
            <person name="Fawcett J.J."/>
            <person name="Glavina T."/>
            <person name="Goodwin L.A."/>
            <person name="Hill K.K."/>
            <person name="Hitchcock P."/>
            <person name="Jackson P.J."/>
            <person name="Keim P."/>
            <person name="Kewalramani A.R."/>
            <person name="Longmire J."/>
            <person name="Lucas S."/>
            <person name="Malfatti S."/>
            <person name="McMurry K."/>
            <person name="Meincke L.J."/>
            <person name="Misra M."/>
            <person name="Moseman B.L."/>
            <person name="Mundt M."/>
            <person name="Munk A.C."/>
            <person name="Okinaka R.T."/>
            <person name="Parson-Quintana B."/>
            <person name="Reilly L.P."/>
            <person name="Richardson P."/>
            <person name="Robinson D.L."/>
            <person name="Rubin E."/>
            <person name="Saunders E."/>
            <person name="Tapia R."/>
            <person name="Tesmer J.G."/>
            <person name="Thayer N."/>
            <person name="Thompson L.S."/>
            <person name="Tice H."/>
            <person name="Ticknor L.O."/>
            <person name="Wills P.L."/>
            <person name="Brettin T.S."/>
            <person name="Gilna P."/>
        </authorList>
    </citation>
    <scope>NUCLEOTIDE SEQUENCE [LARGE SCALE GENOMIC DNA]</scope>
    <source>
        <strain>97-27</strain>
    </source>
</reference>
<organism>
    <name type="scientific">Bacillus thuringiensis subsp. konkukian (strain 97-27)</name>
    <dbReference type="NCBI Taxonomy" id="281309"/>
    <lineage>
        <taxon>Bacteria</taxon>
        <taxon>Bacillati</taxon>
        <taxon>Bacillota</taxon>
        <taxon>Bacilli</taxon>
        <taxon>Bacillales</taxon>
        <taxon>Bacillaceae</taxon>
        <taxon>Bacillus</taxon>
        <taxon>Bacillus cereus group</taxon>
    </lineage>
</organism>
<sequence length="835" mass="95076">MIGILKKVFDVNQRQIKRMQKTVEQIDALESSIKPLTDEQLKGKTLEFKERLTKGETVDDLLPEAFAVVREAATRVLGMRPYGVQLMGGIALHEGNISEMKTGEGKTLTSTLPVYLNALTGKGVHVVTVNEYLAQRDANEMGQLHEFLGLTVGINLNSMSREEKQEAYAADITYSTNNELGFDYLRDNMVLYKEQCVQRPLHFAIIDEVDSILVDEARTPLIISGQAQKSTELYMFANAFVRTLENEKDYSFDVKTKNVMLTEDGITKAEKAFHIENLFDLKHVALLHHINQALRAHVVMHRDTDYVVQEGEIVIVDQFTGRLMKGRRYSEGLHQAIEAKEGVEIQNESMTLATITFQNYFRMYEKLSGMTGTAKTEEEEFRNIYNMNVIVIPTNKPIIRDDRADLIFKSMEGKFNAVVEDIVNRHKQGQPVLVGTVAIETSELISKMLTRKGVRHNILNAKNHAREADIIAEAGMKGAVTIATNMAGRGTDIKLGDDIKNIGLAVIGTERHESRRIDNQLRGRAGRQGDPGVTQFYLSMEDELMRRFGSDNMKAMMDRLGMDDSQPIESKMVSRAVESAQKRVEGNNYDARKQLLQYDDVLRQQREVIYKQRQEVMESENLRGIIEGMMKSTVERAVALHTQEEIEEDWNIKGLVDYLNTNLLQEGDVKEEELRRLAPEEMSEPIIAKLIERYNDKEKLMPEEQMREFEKVVVFRVVDTKWTEHIDAMDHLREGIHLRAYGQIDPLREYQMEGFAMFESMIASIEEEISRYIMKAEIEQNLERQEVVQGEAVHPSSDGEEAKKKPVVKGDQVGRNDLCKCGSGKKYKNCCGIGK</sequence>
<name>SECA1_BACHK</name>
<feature type="chain" id="PRO_0000318322" description="Protein translocase subunit SecA 1">
    <location>
        <begin position="1"/>
        <end position="835"/>
    </location>
</feature>
<feature type="region of interest" description="Disordered" evidence="2">
    <location>
        <begin position="788"/>
        <end position="807"/>
    </location>
</feature>
<feature type="binding site" evidence="1">
    <location>
        <position position="85"/>
    </location>
    <ligand>
        <name>ATP</name>
        <dbReference type="ChEBI" id="CHEBI:30616"/>
    </ligand>
</feature>
<feature type="binding site" evidence="1">
    <location>
        <begin position="103"/>
        <end position="107"/>
    </location>
    <ligand>
        <name>ATP</name>
        <dbReference type="ChEBI" id="CHEBI:30616"/>
    </ligand>
</feature>
<feature type="binding site" evidence="1">
    <location>
        <position position="492"/>
    </location>
    <ligand>
        <name>ATP</name>
        <dbReference type="ChEBI" id="CHEBI:30616"/>
    </ligand>
</feature>
<feature type="binding site" evidence="1">
    <location>
        <position position="819"/>
    </location>
    <ligand>
        <name>Zn(2+)</name>
        <dbReference type="ChEBI" id="CHEBI:29105"/>
    </ligand>
</feature>
<feature type="binding site" evidence="1">
    <location>
        <position position="821"/>
    </location>
    <ligand>
        <name>Zn(2+)</name>
        <dbReference type="ChEBI" id="CHEBI:29105"/>
    </ligand>
</feature>
<feature type="binding site" evidence="1">
    <location>
        <position position="830"/>
    </location>
    <ligand>
        <name>Zn(2+)</name>
        <dbReference type="ChEBI" id="CHEBI:29105"/>
    </ligand>
</feature>
<feature type="binding site" evidence="1">
    <location>
        <position position="831"/>
    </location>
    <ligand>
        <name>Zn(2+)</name>
        <dbReference type="ChEBI" id="CHEBI:29105"/>
    </ligand>
</feature>
<evidence type="ECO:0000255" key="1">
    <source>
        <dbReference type="HAMAP-Rule" id="MF_01382"/>
    </source>
</evidence>
<evidence type="ECO:0000256" key="2">
    <source>
        <dbReference type="SAM" id="MobiDB-lite"/>
    </source>
</evidence>
<proteinExistence type="inferred from homology"/>
<dbReference type="EC" id="7.4.2.8" evidence="1"/>
<dbReference type="EMBL" id="AE017355">
    <property type="protein sequence ID" value="AAT63345.1"/>
    <property type="molecule type" value="Genomic_DNA"/>
</dbReference>
<dbReference type="RefSeq" id="YP_039177.1">
    <property type="nucleotide sequence ID" value="NC_005957.1"/>
</dbReference>
<dbReference type="SMR" id="Q6HB99"/>
<dbReference type="KEGG" id="btk:BT9727_4868"/>
<dbReference type="PATRIC" id="fig|281309.8.peg.5175"/>
<dbReference type="HOGENOM" id="CLU_005314_3_0_9"/>
<dbReference type="Proteomes" id="UP000001301">
    <property type="component" value="Chromosome"/>
</dbReference>
<dbReference type="GO" id="GO:0031522">
    <property type="term" value="C:cell envelope Sec protein transport complex"/>
    <property type="evidence" value="ECO:0007669"/>
    <property type="project" value="TreeGrafter"/>
</dbReference>
<dbReference type="GO" id="GO:0005829">
    <property type="term" value="C:cytosol"/>
    <property type="evidence" value="ECO:0007669"/>
    <property type="project" value="TreeGrafter"/>
</dbReference>
<dbReference type="GO" id="GO:0005886">
    <property type="term" value="C:plasma membrane"/>
    <property type="evidence" value="ECO:0007669"/>
    <property type="project" value="UniProtKB-SubCell"/>
</dbReference>
<dbReference type="GO" id="GO:0005524">
    <property type="term" value="F:ATP binding"/>
    <property type="evidence" value="ECO:0007669"/>
    <property type="project" value="UniProtKB-UniRule"/>
</dbReference>
<dbReference type="GO" id="GO:0046872">
    <property type="term" value="F:metal ion binding"/>
    <property type="evidence" value="ECO:0007669"/>
    <property type="project" value="UniProtKB-KW"/>
</dbReference>
<dbReference type="GO" id="GO:0008564">
    <property type="term" value="F:protein-exporting ATPase activity"/>
    <property type="evidence" value="ECO:0007669"/>
    <property type="project" value="UniProtKB-EC"/>
</dbReference>
<dbReference type="GO" id="GO:0065002">
    <property type="term" value="P:intracellular protein transmembrane transport"/>
    <property type="evidence" value="ECO:0007669"/>
    <property type="project" value="UniProtKB-UniRule"/>
</dbReference>
<dbReference type="GO" id="GO:0017038">
    <property type="term" value="P:protein import"/>
    <property type="evidence" value="ECO:0007669"/>
    <property type="project" value="InterPro"/>
</dbReference>
<dbReference type="GO" id="GO:0006605">
    <property type="term" value="P:protein targeting"/>
    <property type="evidence" value="ECO:0007669"/>
    <property type="project" value="UniProtKB-UniRule"/>
</dbReference>
<dbReference type="GO" id="GO:0043952">
    <property type="term" value="P:protein transport by the Sec complex"/>
    <property type="evidence" value="ECO:0007669"/>
    <property type="project" value="TreeGrafter"/>
</dbReference>
<dbReference type="CDD" id="cd17928">
    <property type="entry name" value="DEXDc_SecA"/>
    <property type="match status" value="1"/>
</dbReference>
<dbReference type="CDD" id="cd18803">
    <property type="entry name" value="SF2_C_secA"/>
    <property type="match status" value="1"/>
</dbReference>
<dbReference type="FunFam" id="1.10.3060.10:FF:000002">
    <property type="entry name" value="Preprotein translocase subunit SecA"/>
    <property type="match status" value="1"/>
</dbReference>
<dbReference type="FunFam" id="3.40.50.300:FF:000081">
    <property type="entry name" value="Preprotein translocase subunit SecA"/>
    <property type="match status" value="1"/>
</dbReference>
<dbReference type="FunFam" id="3.40.50.300:FF:000429">
    <property type="entry name" value="Preprotein translocase subunit SecA"/>
    <property type="match status" value="1"/>
</dbReference>
<dbReference type="FunFam" id="3.90.1440.10:FF:000001">
    <property type="entry name" value="Preprotein translocase subunit SecA"/>
    <property type="match status" value="1"/>
</dbReference>
<dbReference type="Gene3D" id="1.10.3060.10">
    <property type="entry name" value="Helical scaffold and wing domains of SecA"/>
    <property type="match status" value="1"/>
</dbReference>
<dbReference type="Gene3D" id="3.40.50.300">
    <property type="entry name" value="P-loop containing nucleotide triphosphate hydrolases"/>
    <property type="match status" value="3"/>
</dbReference>
<dbReference type="Gene3D" id="3.90.1440.10">
    <property type="entry name" value="SecA, preprotein cross-linking domain"/>
    <property type="match status" value="1"/>
</dbReference>
<dbReference type="HAMAP" id="MF_01382">
    <property type="entry name" value="SecA"/>
    <property type="match status" value="1"/>
</dbReference>
<dbReference type="InterPro" id="IPR014001">
    <property type="entry name" value="Helicase_ATP-bd"/>
</dbReference>
<dbReference type="InterPro" id="IPR001650">
    <property type="entry name" value="Helicase_C-like"/>
</dbReference>
<dbReference type="InterPro" id="IPR027417">
    <property type="entry name" value="P-loop_NTPase"/>
</dbReference>
<dbReference type="InterPro" id="IPR004027">
    <property type="entry name" value="SEC_C_motif"/>
</dbReference>
<dbReference type="InterPro" id="IPR000185">
    <property type="entry name" value="SecA"/>
</dbReference>
<dbReference type="InterPro" id="IPR020937">
    <property type="entry name" value="SecA_CS"/>
</dbReference>
<dbReference type="InterPro" id="IPR011115">
    <property type="entry name" value="SecA_DEAD"/>
</dbReference>
<dbReference type="InterPro" id="IPR014018">
    <property type="entry name" value="SecA_motor_DEAD"/>
</dbReference>
<dbReference type="InterPro" id="IPR011130">
    <property type="entry name" value="SecA_preprotein_X-link_dom"/>
</dbReference>
<dbReference type="InterPro" id="IPR044722">
    <property type="entry name" value="SecA_SF2_C"/>
</dbReference>
<dbReference type="InterPro" id="IPR011116">
    <property type="entry name" value="SecA_Wing/Scaffold"/>
</dbReference>
<dbReference type="InterPro" id="IPR036266">
    <property type="entry name" value="SecA_Wing/Scaffold_sf"/>
</dbReference>
<dbReference type="InterPro" id="IPR036670">
    <property type="entry name" value="SecA_X-link_sf"/>
</dbReference>
<dbReference type="NCBIfam" id="NF006630">
    <property type="entry name" value="PRK09200.1"/>
    <property type="match status" value="1"/>
</dbReference>
<dbReference type="NCBIfam" id="NF009538">
    <property type="entry name" value="PRK12904.1"/>
    <property type="match status" value="1"/>
</dbReference>
<dbReference type="NCBIfam" id="TIGR00963">
    <property type="entry name" value="secA"/>
    <property type="match status" value="1"/>
</dbReference>
<dbReference type="PANTHER" id="PTHR30612:SF0">
    <property type="entry name" value="CHLOROPLAST PROTEIN-TRANSPORTING ATPASE"/>
    <property type="match status" value="1"/>
</dbReference>
<dbReference type="PANTHER" id="PTHR30612">
    <property type="entry name" value="SECA INNER MEMBRANE COMPONENT OF SEC PROTEIN SECRETION SYSTEM"/>
    <property type="match status" value="1"/>
</dbReference>
<dbReference type="Pfam" id="PF21090">
    <property type="entry name" value="P-loop_SecA"/>
    <property type="match status" value="2"/>
</dbReference>
<dbReference type="Pfam" id="PF02810">
    <property type="entry name" value="SEC-C"/>
    <property type="match status" value="1"/>
</dbReference>
<dbReference type="Pfam" id="PF07517">
    <property type="entry name" value="SecA_DEAD"/>
    <property type="match status" value="1"/>
</dbReference>
<dbReference type="Pfam" id="PF01043">
    <property type="entry name" value="SecA_PP_bind"/>
    <property type="match status" value="1"/>
</dbReference>
<dbReference type="Pfam" id="PF07516">
    <property type="entry name" value="SecA_SW"/>
    <property type="match status" value="1"/>
</dbReference>
<dbReference type="PRINTS" id="PR00906">
    <property type="entry name" value="SECA"/>
</dbReference>
<dbReference type="SMART" id="SM00957">
    <property type="entry name" value="SecA_DEAD"/>
    <property type="match status" value="1"/>
</dbReference>
<dbReference type="SMART" id="SM00958">
    <property type="entry name" value="SecA_PP_bind"/>
    <property type="match status" value="1"/>
</dbReference>
<dbReference type="SUPFAM" id="SSF81886">
    <property type="entry name" value="Helical scaffold and wing domains of SecA"/>
    <property type="match status" value="1"/>
</dbReference>
<dbReference type="SUPFAM" id="SSF52540">
    <property type="entry name" value="P-loop containing nucleoside triphosphate hydrolases"/>
    <property type="match status" value="2"/>
</dbReference>
<dbReference type="SUPFAM" id="SSF81767">
    <property type="entry name" value="Pre-protein crosslinking domain of SecA"/>
    <property type="match status" value="1"/>
</dbReference>
<dbReference type="PROSITE" id="PS01312">
    <property type="entry name" value="SECA"/>
    <property type="match status" value="1"/>
</dbReference>
<dbReference type="PROSITE" id="PS51196">
    <property type="entry name" value="SECA_MOTOR_DEAD"/>
    <property type="match status" value="1"/>
</dbReference>
<keyword id="KW-0067">ATP-binding</keyword>
<keyword id="KW-1003">Cell membrane</keyword>
<keyword id="KW-0963">Cytoplasm</keyword>
<keyword id="KW-0472">Membrane</keyword>
<keyword id="KW-0479">Metal-binding</keyword>
<keyword id="KW-0547">Nucleotide-binding</keyword>
<keyword id="KW-0653">Protein transport</keyword>
<keyword id="KW-1278">Translocase</keyword>
<keyword id="KW-0811">Translocation</keyword>
<keyword id="KW-0813">Transport</keyword>
<keyword id="KW-0862">Zinc</keyword>
<accession>Q6HB99</accession>